<name>DEN4B_HUMAN</name>
<protein>
    <recommendedName>
        <fullName>DENN domain-containing protein 4B</fullName>
    </recommendedName>
</protein>
<dbReference type="EMBL" id="AB007945">
    <property type="protein sequence ID" value="BAA32321.3"/>
    <property type="status" value="ALT_INIT"/>
    <property type="molecule type" value="mRNA"/>
</dbReference>
<dbReference type="EMBL" id="AL358472">
    <property type="status" value="NOT_ANNOTATED_CDS"/>
    <property type="molecule type" value="Genomic_DNA"/>
</dbReference>
<dbReference type="EMBL" id="CH471121">
    <property type="protein sequence ID" value="EAW53268.1"/>
    <property type="status" value="ALT_SEQ"/>
    <property type="molecule type" value="Genomic_DNA"/>
</dbReference>
<dbReference type="CCDS" id="CCDS44228.1"/>
<dbReference type="PIR" id="T00257">
    <property type="entry name" value="T00257"/>
</dbReference>
<dbReference type="RefSeq" id="NP_055671.2">
    <property type="nucleotide sequence ID" value="NM_014856.2"/>
</dbReference>
<dbReference type="RefSeq" id="XP_005245736.1">
    <property type="nucleotide sequence ID" value="XM_005245679.2"/>
</dbReference>
<dbReference type="SMR" id="O75064"/>
<dbReference type="BioGRID" id="115238">
    <property type="interactions" value="20"/>
</dbReference>
<dbReference type="FunCoup" id="O75064">
    <property type="interactions" value="2308"/>
</dbReference>
<dbReference type="IntAct" id="O75064">
    <property type="interactions" value="8"/>
</dbReference>
<dbReference type="STRING" id="9606.ENSP00000354597"/>
<dbReference type="GlyGen" id="O75064">
    <property type="glycosylation" value="2 sites, 1 O-linked glycan (1 site)"/>
</dbReference>
<dbReference type="iPTMnet" id="O75064"/>
<dbReference type="PhosphoSitePlus" id="O75064"/>
<dbReference type="BioMuta" id="DENND4B"/>
<dbReference type="jPOST" id="O75064"/>
<dbReference type="MassIVE" id="O75064"/>
<dbReference type="PaxDb" id="9606-ENSP00000354597"/>
<dbReference type="PeptideAtlas" id="O75064"/>
<dbReference type="ProteomicsDB" id="49735"/>
<dbReference type="Pumba" id="O75064"/>
<dbReference type="Antibodypedia" id="50670">
    <property type="antibodies" value="23 antibodies from 7 providers"/>
</dbReference>
<dbReference type="DNASU" id="9909"/>
<dbReference type="Ensembl" id="ENST00000361217.9">
    <property type="protein sequence ID" value="ENSP00000354597.4"/>
    <property type="gene ID" value="ENSG00000198837.10"/>
</dbReference>
<dbReference type="GeneID" id="9909"/>
<dbReference type="KEGG" id="hsa:9909"/>
<dbReference type="MANE-Select" id="ENST00000361217.9">
    <property type="protein sequence ID" value="ENSP00000354597.4"/>
    <property type="RefSeq nucleotide sequence ID" value="NM_014856.3"/>
    <property type="RefSeq protein sequence ID" value="NP_055671.2"/>
</dbReference>
<dbReference type="UCSC" id="uc001fdd.2">
    <property type="organism name" value="human"/>
</dbReference>
<dbReference type="AGR" id="HGNC:29044"/>
<dbReference type="CTD" id="9909"/>
<dbReference type="DisGeNET" id="9909"/>
<dbReference type="GeneCards" id="DENND4B"/>
<dbReference type="HGNC" id="HGNC:29044">
    <property type="gene designation" value="DENND4B"/>
</dbReference>
<dbReference type="HPA" id="ENSG00000198837">
    <property type="expression patterns" value="Low tissue specificity"/>
</dbReference>
<dbReference type="MIM" id="619843">
    <property type="type" value="gene"/>
</dbReference>
<dbReference type="neXtProt" id="NX_O75064"/>
<dbReference type="OpenTargets" id="ENSG00000198837"/>
<dbReference type="PharmGKB" id="PA142671629"/>
<dbReference type="VEuPathDB" id="HostDB:ENSG00000198837"/>
<dbReference type="eggNOG" id="KOG2127">
    <property type="taxonomic scope" value="Eukaryota"/>
</dbReference>
<dbReference type="GeneTree" id="ENSGT00940000160472"/>
<dbReference type="InParanoid" id="O75064"/>
<dbReference type="OMA" id="VVWPGPI"/>
<dbReference type="OrthoDB" id="75250at2759"/>
<dbReference type="PAN-GO" id="O75064">
    <property type="GO annotations" value="2 GO annotations based on evolutionary models"/>
</dbReference>
<dbReference type="PhylomeDB" id="O75064"/>
<dbReference type="TreeFam" id="TF313237"/>
<dbReference type="PathwayCommons" id="O75064"/>
<dbReference type="Reactome" id="R-HSA-8876198">
    <property type="pathway name" value="RAB GEFs exchange GTP for GDP on RABs"/>
</dbReference>
<dbReference type="SignaLink" id="O75064"/>
<dbReference type="BioGRID-ORCS" id="9909">
    <property type="hits" value="11 hits in 1157 CRISPR screens"/>
</dbReference>
<dbReference type="ChiTaRS" id="DENND4B">
    <property type="organism name" value="human"/>
</dbReference>
<dbReference type="GenomeRNAi" id="9909"/>
<dbReference type="Pharos" id="O75064">
    <property type="development level" value="Tbio"/>
</dbReference>
<dbReference type="PRO" id="PR:O75064"/>
<dbReference type="Proteomes" id="UP000005640">
    <property type="component" value="Chromosome 1"/>
</dbReference>
<dbReference type="RNAct" id="O75064">
    <property type="molecule type" value="protein"/>
</dbReference>
<dbReference type="Bgee" id="ENSG00000198837">
    <property type="expression patterns" value="Expressed in granulocyte and 206 other cell types or tissues"/>
</dbReference>
<dbReference type="ExpressionAtlas" id="O75064">
    <property type="expression patterns" value="baseline and differential"/>
</dbReference>
<dbReference type="GO" id="GO:0031410">
    <property type="term" value="C:cytoplasmic vesicle"/>
    <property type="evidence" value="ECO:0000318"/>
    <property type="project" value="GO_Central"/>
</dbReference>
<dbReference type="GO" id="GO:0005829">
    <property type="term" value="C:cytosol"/>
    <property type="evidence" value="ECO:0000304"/>
    <property type="project" value="Reactome"/>
</dbReference>
<dbReference type="GO" id="GO:0005794">
    <property type="term" value="C:Golgi apparatus"/>
    <property type="evidence" value="ECO:0000314"/>
    <property type="project" value="UniProtKB"/>
</dbReference>
<dbReference type="GO" id="GO:0005654">
    <property type="term" value="C:nucleoplasm"/>
    <property type="evidence" value="ECO:0000314"/>
    <property type="project" value="HPA"/>
</dbReference>
<dbReference type="GO" id="GO:0005085">
    <property type="term" value="F:guanyl-nucleotide exchange factor activity"/>
    <property type="evidence" value="ECO:0000314"/>
    <property type="project" value="UniProtKB"/>
</dbReference>
<dbReference type="GO" id="GO:0032483">
    <property type="term" value="P:regulation of Rab protein signal transduction"/>
    <property type="evidence" value="ECO:0000314"/>
    <property type="project" value="FlyBase"/>
</dbReference>
<dbReference type="FunFam" id="1.25.40.10:FF:000042">
    <property type="entry name" value="C-myc promoter-binding protein isoform X1"/>
    <property type="match status" value="1"/>
</dbReference>
<dbReference type="FunFam" id="2.100.10.50:FF:000001">
    <property type="entry name" value="DENN domain containing 4C"/>
    <property type="match status" value="1"/>
</dbReference>
<dbReference type="Gene3D" id="2.100.10.50">
    <property type="match status" value="1"/>
</dbReference>
<dbReference type="Gene3D" id="3.40.50.11500">
    <property type="match status" value="1"/>
</dbReference>
<dbReference type="Gene3D" id="1.25.40.10">
    <property type="entry name" value="Tetratricopeptide repeat domain"/>
    <property type="match status" value="1"/>
</dbReference>
<dbReference type="InterPro" id="IPR001194">
    <property type="entry name" value="cDENN_dom"/>
</dbReference>
<dbReference type="InterPro" id="IPR005112">
    <property type="entry name" value="dDENN_dom"/>
</dbReference>
<dbReference type="InterPro" id="IPR043153">
    <property type="entry name" value="DENN_C"/>
</dbReference>
<dbReference type="InterPro" id="IPR051696">
    <property type="entry name" value="DENN_Domain_GEFs"/>
</dbReference>
<dbReference type="InterPro" id="IPR023341">
    <property type="entry name" value="MABP"/>
</dbReference>
<dbReference type="InterPro" id="IPR002885">
    <property type="entry name" value="Pentatricopeptide_rpt"/>
</dbReference>
<dbReference type="InterPro" id="IPR011990">
    <property type="entry name" value="TPR-like_helical_dom_sf"/>
</dbReference>
<dbReference type="InterPro" id="IPR037516">
    <property type="entry name" value="Tripartite_DENN"/>
</dbReference>
<dbReference type="InterPro" id="IPR005113">
    <property type="entry name" value="uDENN_dom"/>
</dbReference>
<dbReference type="PANTHER" id="PTHR12296">
    <property type="entry name" value="DENN DOMAIN-CONTAINING PROTEIN 4"/>
    <property type="match status" value="1"/>
</dbReference>
<dbReference type="PANTHER" id="PTHR12296:SF18">
    <property type="entry name" value="DENN DOMAIN-CONTAINING PROTEIN 4B"/>
    <property type="match status" value="1"/>
</dbReference>
<dbReference type="Pfam" id="PF03455">
    <property type="entry name" value="dDENN"/>
    <property type="match status" value="1"/>
</dbReference>
<dbReference type="Pfam" id="PF02141">
    <property type="entry name" value="DENN"/>
    <property type="match status" value="1"/>
</dbReference>
<dbReference type="Pfam" id="PF03456">
    <property type="entry name" value="uDENN"/>
    <property type="match status" value="1"/>
</dbReference>
<dbReference type="SMART" id="SM00801">
    <property type="entry name" value="dDENN"/>
    <property type="match status" value="1"/>
</dbReference>
<dbReference type="SMART" id="SM00799">
    <property type="entry name" value="DENN"/>
    <property type="match status" value="1"/>
</dbReference>
<dbReference type="SMART" id="SM00800">
    <property type="entry name" value="uDENN"/>
    <property type="match status" value="1"/>
</dbReference>
<dbReference type="PROSITE" id="PS50211">
    <property type="entry name" value="DENN"/>
    <property type="match status" value="1"/>
</dbReference>
<dbReference type="PROSITE" id="PS51498">
    <property type="entry name" value="MABP"/>
    <property type="match status" value="1"/>
</dbReference>
<dbReference type="PROSITE" id="PS51375">
    <property type="entry name" value="PPR"/>
    <property type="match status" value="1"/>
</dbReference>
<comment type="function">
    <text evidence="4">Guanine nucleotide exchange factor (GEF) which may activate RAB10. Promotes the exchange of GDP to GTP, converting inactive GDP-bound Rab proteins into their active GTP-bound form.</text>
</comment>
<comment type="subcellular location">
    <subcellularLocation>
        <location evidence="4">Golgi apparatus</location>
    </subcellularLocation>
</comment>
<comment type="sequence caution" evidence="5">
    <conflict type="erroneous initiation">
        <sequence resource="EMBL-CDS" id="BAA32321"/>
    </conflict>
</comment>
<comment type="sequence caution" evidence="5">
    <conflict type="erroneous gene model prediction">
        <sequence resource="EMBL-CDS" id="EAW53268"/>
    </conflict>
</comment>
<feature type="chain" id="PRO_0000304678" description="DENN domain-containing protein 4B">
    <location>
        <begin position="1"/>
        <end position="1496"/>
    </location>
</feature>
<feature type="domain" description="MABP" evidence="2">
    <location>
        <begin position="44"/>
        <end position="203"/>
    </location>
</feature>
<feature type="domain" description="uDENN" evidence="1">
    <location>
        <begin position="195"/>
        <end position="369"/>
    </location>
</feature>
<feature type="domain" description="cDENN" evidence="1">
    <location>
        <begin position="390"/>
        <end position="526"/>
    </location>
</feature>
<feature type="domain" description="dDENN" evidence="1">
    <location>
        <begin position="528"/>
        <end position="644"/>
    </location>
</feature>
<feature type="repeat" description="PPR 1">
    <location>
        <begin position="775"/>
        <end position="811"/>
    </location>
</feature>
<feature type="repeat" description="PPR 2">
    <location>
        <begin position="812"/>
        <end position="846"/>
    </location>
</feature>
<feature type="region of interest" description="Disordered" evidence="3">
    <location>
        <begin position="720"/>
        <end position="744"/>
    </location>
</feature>
<feature type="region of interest" description="Disordered" evidence="3">
    <location>
        <begin position="891"/>
        <end position="970"/>
    </location>
</feature>
<feature type="region of interest" description="Disordered" evidence="3">
    <location>
        <begin position="995"/>
        <end position="1055"/>
    </location>
</feature>
<feature type="region of interest" description="Disordered" evidence="3">
    <location>
        <begin position="1067"/>
        <end position="1119"/>
    </location>
</feature>
<feature type="region of interest" description="Disordered" evidence="3">
    <location>
        <begin position="1205"/>
        <end position="1227"/>
    </location>
</feature>
<feature type="compositionally biased region" description="Low complexity" evidence="3">
    <location>
        <begin position="729"/>
        <end position="739"/>
    </location>
</feature>
<feature type="compositionally biased region" description="Low complexity" evidence="3">
    <location>
        <begin position="896"/>
        <end position="912"/>
    </location>
</feature>
<feature type="compositionally biased region" description="Polar residues" evidence="3">
    <location>
        <begin position="913"/>
        <end position="924"/>
    </location>
</feature>
<feature type="compositionally biased region" description="Polar residues" evidence="3">
    <location>
        <begin position="935"/>
        <end position="944"/>
    </location>
</feature>
<feature type="compositionally biased region" description="Pro residues" evidence="3">
    <location>
        <begin position="1075"/>
        <end position="1090"/>
    </location>
</feature>
<feature type="compositionally biased region" description="Low complexity" evidence="3">
    <location>
        <begin position="1105"/>
        <end position="1119"/>
    </location>
</feature>
<feature type="modified residue" description="Phosphoserine" evidence="6">
    <location>
        <position position="953"/>
    </location>
</feature>
<feature type="modified residue" description="Phosphoserine" evidence="6">
    <location>
        <position position="1092"/>
    </location>
</feature>
<reference key="1">
    <citation type="journal article" date="1997" name="DNA Res.">
        <title>Characterization of cDNA clones in size-fractionated cDNA libraries from human brain.</title>
        <authorList>
            <person name="Seki N."/>
            <person name="Ohira M."/>
            <person name="Nagase T."/>
            <person name="Ishikawa K."/>
            <person name="Miyajima N."/>
            <person name="Nakajima D."/>
            <person name="Nomura N."/>
            <person name="Ohara O."/>
        </authorList>
    </citation>
    <scope>NUCLEOTIDE SEQUENCE [LARGE SCALE MRNA]</scope>
    <source>
        <tissue>Brain</tissue>
    </source>
</reference>
<reference key="2">
    <citation type="journal article" date="2006" name="Nature">
        <title>The DNA sequence and biological annotation of human chromosome 1.</title>
        <authorList>
            <person name="Gregory S.G."/>
            <person name="Barlow K.F."/>
            <person name="McLay K.E."/>
            <person name="Kaul R."/>
            <person name="Swarbreck D."/>
            <person name="Dunham A."/>
            <person name="Scott C.E."/>
            <person name="Howe K.L."/>
            <person name="Woodfine K."/>
            <person name="Spencer C.C.A."/>
            <person name="Jones M.C."/>
            <person name="Gillson C."/>
            <person name="Searle S."/>
            <person name="Zhou Y."/>
            <person name="Kokocinski F."/>
            <person name="McDonald L."/>
            <person name="Evans R."/>
            <person name="Phillips K."/>
            <person name="Atkinson A."/>
            <person name="Cooper R."/>
            <person name="Jones C."/>
            <person name="Hall R.E."/>
            <person name="Andrews T.D."/>
            <person name="Lloyd C."/>
            <person name="Ainscough R."/>
            <person name="Almeida J.P."/>
            <person name="Ambrose K.D."/>
            <person name="Anderson F."/>
            <person name="Andrew R.W."/>
            <person name="Ashwell R.I.S."/>
            <person name="Aubin K."/>
            <person name="Babbage A.K."/>
            <person name="Bagguley C.L."/>
            <person name="Bailey J."/>
            <person name="Beasley H."/>
            <person name="Bethel G."/>
            <person name="Bird C.P."/>
            <person name="Bray-Allen S."/>
            <person name="Brown J.Y."/>
            <person name="Brown A.J."/>
            <person name="Buckley D."/>
            <person name="Burton J."/>
            <person name="Bye J."/>
            <person name="Carder C."/>
            <person name="Chapman J.C."/>
            <person name="Clark S.Y."/>
            <person name="Clarke G."/>
            <person name="Clee C."/>
            <person name="Cobley V."/>
            <person name="Collier R.E."/>
            <person name="Corby N."/>
            <person name="Coville G.J."/>
            <person name="Davies J."/>
            <person name="Deadman R."/>
            <person name="Dunn M."/>
            <person name="Earthrowl M."/>
            <person name="Ellington A.G."/>
            <person name="Errington H."/>
            <person name="Frankish A."/>
            <person name="Frankland J."/>
            <person name="French L."/>
            <person name="Garner P."/>
            <person name="Garnett J."/>
            <person name="Gay L."/>
            <person name="Ghori M.R.J."/>
            <person name="Gibson R."/>
            <person name="Gilby L.M."/>
            <person name="Gillett W."/>
            <person name="Glithero R.J."/>
            <person name="Grafham D.V."/>
            <person name="Griffiths C."/>
            <person name="Griffiths-Jones S."/>
            <person name="Grocock R."/>
            <person name="Hammond S."/>
            <person name="Harrison E.S.I."/>
            <person name="Hart E."/>
            <person name="Haugen E."/>
            <person name="Heath P.D."/>
            <person name="Holmes S."/>
            <person name="Holt K."/>
            <person name="Howden P.J."/>
            <person name="Hunt A.R."/>
            <person name="Hunt S.E."/>
            <person name="Hunter G."/>
            <person name="Isherwood J."/>
            <person name="James R."/>
            <person name="Johnson C."/>
            <person name="Johnson D."/>
            <person name="Joy A."/>
            <person name="Kay M."/>
            <person name="Kershaw J.K."/>
            <person name="Kibukawa M."/>
            <person name="Kimberley A.M."/>
            <person name="King A."/>
            <person name="Knights A.J."/>
            <person name="Lad H."/>
            <person name="Laird G."/>
            <person name="Lawlor S."/>
            <person name="Leongamornlert D.A."/>
            <person name="Lloyd D.M."/>
            <person name="Loveland J."/>
            <person name="Lovell J."/>
            <person name="Lush M.J."/>
            <person name="Lyne R."/>
            <person name="Martin S."/>
            <person name="Mashreghi-Mohammadi M."/>
            <person name="Matthews L."/>
            <person name="Matthews N.S.W."/>
            <person name="McLaren S."/>
            <person name="Milne S."/>
            <person name="Mistry S."/>
            <person name="Moore M.J.F."/>
            <person name="Nickerson T."/>
            <person name="O'Dell C.N."/>
            <person name="Oliver K."/>
            <person name="Palmeiri A."/>
            <person name="Palmer S.A."/>
            <person name="Parker A."/>
            <person name="Patel D."/>
            <person name="Pearce A.V."/>
            <person name="Peck A.I."/>
            <person name="Pelan S."/>
            <person name="Phelps K."/>
            <person name="Phillimore B.J."/>
            <person name="Plumb R."/>
            <person name="Rajan J."/>
            <person name="Raymond C."/>
            <person name="Rouse G."/>
            <person name="Saenphimmachak C."/>
            <person name="Sehra H.K."/>
            <person name="Sheridan E."/>
            <person name="Shownkeen R."/>
            <person name="Sims S."/>
            <person name="Skuce C.D."/>
            <person name="Smith M."/>
            <person name="Steward C."/>
            <person name="Subramanian S."/>
            <person name="Sycamore N."/>
            <person name="Tracey A."/>
            <person name="Tromans A."/>
            <person name="Van Helmond Z."/>
            <person name="Wall M."/>
            <person name="Wallis J.M."/>
            <person name="White S."/>
            <person name="Whitehead S.L."/>
            <person name="Wilkinson J.E."/>
            <person name="Willey D.L."/>
            <person name="Williams H."/>
            <person name="Wilming L."/>
            <person name="Wray P.W."/>
            <person name="Wu Z."/>
            <person name="Coulson A."/>
            <person name="Vaudin M."/>
            <person name="Sulston J.E."/>
            <person name="Durbin R.M."/>
            <person name="Hubbard T."/>
            <person name="Wooster R."/>
            <person name="Dunham I."/>
            <person name="Carter N.P."/>
            <person name="McVean G."/>
            <person name="Ross M.T."/>
            <person name="Harrow J."/>
            <person name="Olson M.V."/>
            <person name="Beck S."/>
            <person name="Rogers J."/>
            <person name="Bentley D.R."/>
        </authorList>
    </citation>
    <scope>NUCLEOTIDE SEQUENCE [LARGE SCALE GENOMIC DNA]</scope>
</reference>
<reference key="3">
    <citation type="submission" date="2005-09" db="EMBL/GenBank/DDBJ databases">
        <authorList>
            <person name="Mural R.J."/>
            <person name="Istrail S."/>
            <person name="Sutton G.G."/>
            <person name="Florea L."/>
            <person name="Halpern A.L."/>
            <person name="Mobarry C.M."/>
            <person name="Lippert R."/>
            <person name="Walenz B."/>
            <person name="Shatkay H."/>
            <person name="Dew I."/>
            <person name="Miller J.R."/>
            <person name="Flanigan M.J."/>
            <person name="Edwards N.J."/>
            <person name="Bolanos R."/>
            <person name="Fasulo D."/>
            <person name="Halldorsson B.V."/>
            <person name="Hannenhalli S."/>
            <person name="Turner R."/>
            <person name="Yooseph S."/>
            <person name="Lu F."/>
            <person name="Nusskern D.R."/>
            <person name="Shue B.C."/>
            <person name="Zheng X.H."/>
            <person name="Zhong F."/>
            <person name="Delcher A.L."/>
            <person name="Huson D.H."/>
            <person name="Kravitz S.A."/>
            <person name="Mouchard L."/>
            <person name="Reinert K."/>
            <person name="Remington K.A."/>
            <person name="Clark A.G."/>
            <person name="Waterman M.S."/>
            <person name="Eichler E.E."/>
            <person name="Adams M.D."/>
            <person name="Hunkapiller M.W."/>
            <person name="Myers E.W."/>
            <person name="Venter J.C."/>
        </authorList>
    </citation>
    <scope>NUCLEOTIDE SEQUENCE [LARGE SCALE GENOMIC DNA]</scope>
</reference>
<reference key="4">
    <citation type="journal article" date="2003" name="Genomics">
        <title>Molecular cloning, structural analysis, and expression of a human IRLB, MYC promoter-binding protein: new DENN domain-containing protein family emerges.</title>
        <authorList>
            <person name="Semova N."/>
            <person name="Kapanadze B."/>
            <person name="Corcoran M."/>
            <person name="Kutsenko A."/>
            <person name="Baranova A."/>
            <person name="Semov A."/>
        </authorList>
    </citation>
    <scope>IDENTIFICATION</scope>
</reference>
<reference key="5">
    <citation type="journal article" date="2010" name="J. Cell Biol.">
        <title>Family-wide characterization of the DENN domain Rab GDP-GTP exchange factors.</title>
        <authorList>
            <person name="Yoshimura S."/>
            <person name="Gerondopoulos A."/>
            <person name="Linford A."/>
            <person name="Rigden D.J."/>
            <person name="Barr F.A."/>
        </authorList>
    </citation>
    <scope>FUNCTION AS GUANYL-NUCLEOTIDE EXCHANGE FACTOR</scope>
    <scope>SUBCELLULAR LOCATION</scope>
</reference>
<reference key="6">
    <citation type="journal article" date="2013" name="J. Proteome Res.">
        <title>Toward a comprehensive characterization of a human cancer cell phosphoproteome.</title>
        <authorList>
            <person name="Zhou H."/>
            <person name="Di Palma S."/>
            <person name="Preisinger C."/>
            <person name="Peng M."/>
            <person name="Polat A.N."/>
            <person name="Heck A.J."/>
            <person name="Mohammed S."/>
        </authorList>
    </citation>
    <scope>PHOSPHORYLATION [LARGE SCALE ANALYSIS] AT SER-953 AND SER-1092</scope>
    <scope>IDENTIFICATION BY MASS SPECTROMETRY [LARGE SCALE ANALYSIS]</scope>
    <source>
        <tissue>Cervix carcinoma</tissue>
        <tissue>Erythroleukemia</tissue>
    </source>
</reference>
<reference key="7">
    <citation type="journal article" date="2014" name="J. Proteomics">
        <title>An enzyme assisted RP-RPLC approach for in-depth analysis of human liver phosphoproteome.</title>
        <authorList>
            <person name="Bian Y."/>
            <person name="Song C."/>
            <person name="Cheng K."/>
            <person name="Dong M."/>
            <person name="Wang F."/>
            <person name="Huang J."/>
            <person name="Sun D."/>
            <person name="Wang L."/>
            <person name="Ye M."/>
            <person name="Zou H."/>
        </authorList>
    </citation>
    <scope>IDENTIFICATION BY MASS SPECTROMETRY [LARGE SCALE ANALYSIS]</scope>
    <source>
        <tissue>Liver</tissue>
    </source>
</reference>
<sequence>MAEERPPRLVDYFVVAGLAGNGAPIPEETWVPEPSGPLRPPRPAEPITDVAVIARALGEEVPQGYTCIQASAGGHPLELSAGLLGGTQPVICYRRGRDKPPLVELGVLYEGKERPKPGFQVLDTTPYSHSANLAPPGPGHPRTYLTYRRAAEGAGLHALGITDLCLVLPSKGEGTPHTYCRLPRNLNPGMWGPAVYLCYKVGLAKANTLVYEAELLGRYPEEDNEAFPLPESVPVFCLPMGATIECWPAQTKYPVPVFSTFVLTGAAGDKVYGAALQFYEAFPRARLSERQARALGLLSAVERGRALGGRAVRSRRAIAVLSRWPAFPAFRAFLTFLYRYSVSGPHRLPLEAHISHFIHNVPFPSPQRPRILVQMSPYDNLLLCQPVSSPLPLSGASFLQLLQSLGPELAITLLLAVLTEHKLLVHSLRPDLLTSVCEALVSMIFPLHWQCPYIPLCPLVLADVLSAPVPFIVGIHSSYFDLHDPPADVICVDLDTNTLFQTEEKKLLSPRTLPRRPYKVLLATLTNLYQQLDQTYTGPEEEASLEFLLTDYEAVCGRRARLEREVQGAFLRFMACLLKGYRVFLRPLTQAPSEGARDVDNLFFLQGFLKSRERSSHKLYSQLLHTQMFSQFIEECSFGSARHAALEFFDSCVEKVHPEQEKPEPTPLVELEELSGSELTVFITPPEEPALPEGSESTPQYCYDGFPELRAELFESLQEQPGALPVPGPSRSAPSSPAPRRTKQEMKVAQRMAQKSAAVPELWARCLLGHCYGLWFLCLPAYVRSAPSRVQALHTAYHVLRQMESGKVVLPDEVCYRVLMQLCSHYGQPVLSVRVMLEMRQAGIVPNTITYGYYNKAVLESKWPSGTPGGRLRWAKLRNVVLGAAQFRQPLRERQQQQQQQQQQQQQQQQEQVSAHQEAGSSQAEPYLERPSPTRPLQRQTTWAGRSLRDPASPPGRLVKSGSLGSARGAQPTVEAGVAHMIEALGVLEPRGSPVPWHDGSLSDLSLTGEEPLPGGSPGGSGSALSAQSTEALEGLSGRGPKAGGRQDEAGTPRRGLGARLQQLLTPSRHSPASRIPPPELPPDLPPPARRSPMDSLLHPRERPGSTASESSASLGSEWDLSESSLSNLSLRRSSERLSDTPGSFQSPSLEILLSSCSLCRACDSLVYDEEIMAGWAPDDSNLNTTCPFCACPFVPLLSVQTLDSRPSVPSPKSAGASGSKDAPVPGGPGPVLSDRRLCLALDEPQLCNGHMGGASRRVESGAWAYLSPLVLRKELESLVENEGSEVLALPELPSAHPIIFWNLLWYFQRLRLPSILPGLVLASCDGPSHSQAPSPWLTPDPASVQVRLLWDVLTPDPNSCPPLYVLWRVHSQIPQRVVWPGPVPASLSLALLESVLRHVGLNEVHKAVGLLLETLGPPPTGLHLQRGIYREILFLTMAALGKDHVDIVAFDKKYKSAFNKLASSMGKEELRHRRAQMPTPKAIDCRKCFGAPPEC</sequence>
<evidence type="ECO:0000255" key="1">
    <source>
        <dbReference type="PROSITE-ProRule" id="PRU00304"/>
    </source>
</evidence>
<evidence type="ECO:0000255" key="2">
    <source>
        <dbReference type="PROSITE-ProRule" id="PRU00831"/>
    </source>
</evidence>
<evidence type="ECO:0000256" key="3">
    <source>
        <dbReference type="SAM" id="MobiDB-lite"/>
    </source>
</evidence>
<evidence type="ECO:0000269" key="4">
    <source>
    </source>
</evidence>
<evidence type="ECO:0000305" key="5"/>
<evidence type="ECO:0007744" key="6">
    <source>
    </source>
</evidence>
<accession>O75064</accession>
<accession>Q5T4K0</accession>
<keyword id="KW-0333">Golgi apparatus</keyword>
<keyword id="KW-0344">Guanine-nucleotide releasing factor</keyword>
<keyword id="KW-0597">Phosphoprotein</keyword>
<keyword id="KW-1267">Proteomics identification</keyword>
<keyword id="KW-1185">Reference proteome</keyword>
<keyword id="KW-0677">Repeat</keyword>
<proteinExistence type="evidence at protein level"/>
<organism>
    <name type="scientific">Homo sapiens</name>
    <name type="common">Human</name>
    <dbReference type="NCBI Taxonomy" id="9606"/>
    <lineage>
        <taxon>Eukaryota</taxon>
        <taxon>Metazoa</taxon>
        <taxon>Chordata</taxon>
        <taxon>Craniata</taxon>
        <taxon>Vertebrata</taxon>
        <taxon>Euteleostomi</taxon>
        <taxon>Mammalia</taxon>
        <taxon>Eutheria</taxon>
        <taxon>Euarchontoglires</taxon>
        <taxon>Primates</taxon>
        <taxon>Haplorrhini</taxon>
        <taxon>Catarrhini</taxon>
        <taxon>Hominidae</taxon>
        <taxon>Homo</taxon>
    </lineage>
</organism>
<gene>
    <name type="primary">DENND4B</name>
    <name type="synonym">KIAA0476</name>
</gene>